<feature type="initiator methionine" description="Removed" evidence="1">
    <location>
        <position position="1"/>
    </location>
</feature>
<feature type="chain" id="PRO_0000103721" description="Uncharacterized protein Rv0877">
    <location>
        <begin position="2"/>
        <end position="262"/>
    </location>
</feature>
<feature type="modified residue" description="N-acetylthreonine" evidence="1">
    <location>
        <position position="2"/>
    </location>
</feature>
<proteinExistence type="evidence at protein level"/>
<sequence length="262" mass="27469">MTGPTEESAVATVADWPEGLAAVLRGAADQARAAVVEFSGPEAVGDYLGVSYEDGNAATHRFIAHLPGYQGWQWAVVVASYSGADHATISEVVLVPGPTALLAPDWVPWEQRVRPGDLSPGDLLAPAKDDPRLVPGYTASGDAQVDETAAEIGLGRRWVMSAWGRAQSAQRWHDGDYGPGSAMARSTKRVCRDCGFFLPLAGSLGAMFGVCGNELSADGHVVDRQYGCGAHSDTTAPAGGSTPIYEPYDDGVLDIIEKPAES</sequence>
<keyword id="KW-0007">Acetylation</keyword>
<keyword id="KW-1185">Reference proteome</keyword>
<accession>P9WKR3</accession>
<accession>L0T515</accession>
<accession>P64733</accession>
<accession>Q10539</accession>
<protein>
    <recommendedName>
        <fullName>Uncharacterized protein Rv0877</fullName>
    </recommendedName>
</protein>
<dbReference type="EMBL" id="AL123456">
    <property type="protein sequence ID" value="CCP43625.1"/>
    <property type="molecule type" value="Genomic_DNA"/>
</dbReference>
<dbReference type="PIR" id="B70780">
    <property type="entry name" value="B70780"/>
</dbReference>
<dbReference type="RefSeq" id="NP_215392.1">
    <property type="nucleotide sequence ID" value="NC_000962.3"/>
</dbReference>
<dbReference type="RefSeq" id="WP_003404596.1">
    <property type="nucleotide sequence ID" value="NZ_NVQJ01000001.1"/>
</dbReference>
<dbReference type="STRING" id="83332.Rv0877"/>
<dbReference type="iPTMnet" id="P9WKR3"/>
<dbReference type="PaxDb" id="83332-Rv0877"/>
<dbReference type="DNASU" id="885601"/>
<dbReference type="GeneID" id="885601"/>
<dbReference type="KEGG" id="mtu:Rv0877"/>
<dbReference type="KEGG" id="mtv:RVBD_0877"/>
<dbReference type="TubercuList" id="Rv0877"/>
<dbReference type="eggNOG" id="ENOG502ZBU7">
    <property type="taxonomic scope" value="Bacteria"/>
</dbReference>
<dbReference type="InParanoid" id="P9WKR3"/>
<dbReference type="OrthoDB" id="3210158at2"/>
<dbReference type="PhylomeDB" id="P9WKR3"/>
<dbReference type="Proteomes" id="UP000001584">
    <property type="component" value="Chromosome"/>
</dbReference>
<dbReference type="InterPro" id="IPR021391">
    <property type="entry name" value="DUF3027"/>
</dbReference>
<dbReference type="Pfam" id="PF11228">
    <property type="entry name" value="DUF3027"/>
    <property type="match status" value="1"/>
</dbReference>
<gene>
    <name type="ordered locus">Rv0877</name>
    <name type="ORF">MTCY31.05</name>
</gene>
<organism>
    <name type="scientific">Mycobacterium tuberculosis (strain ATCC 25618 / H37Rv)</name>
    <dbReference type="NCBI Taxonomy" id="83332"/>
    <lineage>
        <taxon>Bacteria</taxon>
        <taxon>Bacillati</taxon>
        <taxon>Actinomycetota</taxon>
        <taxon>Actinomycetes</taxon>
        <taxon>Mycobacteriales</taxon>
        <taxon>Mycobacteriaceae</taxon>
        <taxon>Mycobacterium</taxon>
        <taxon>Mycobacterium tuberculosis complex</taxon>
    </lineage>
</organism>
<reference key="1">
    <citation type="journal article" date="1998" name="Nature">
        <title>Deciphering the biology of Mycobacterium tuberculosis from the complete genome sequence.</title>
        <authorList>
            <person name="Cole S.T."/>
            <person name="Brosch R."/>
            <person name="Parkhill J."/>
            <person name="Garnier T."/>
            <person name="Churcher C.M."/>
            <person name="Harris D.E."/>
            <person name="Gordon S.V."/>
            <person name="Eiglmeier K."/>
            <person name="Gas S."/>
            <person name="Barry C.E. III"/>
            <person name="Tekaia F."/>
            <person name="Badcock K."/>
            <person name="Basham D."/>
            <person name="Brown D."/>
            <person name="Chillingworth T."/>
            <person name="Connor R."/>
            <person name="Davies R.M."/>
            <person name="Devlin K."/>
            <person name="Feltwell T."/>
            <person name="Gentles S."/>
            <person name="Hamlin N."/>
            <person name="Holroyd S."/>
            <person name="Hornsby T."/>
            <person name="Jagels K."/>
            <person name="Krogh A."/>
            <person name="McLean J."/>
            <person name="Moule S."/>
            <person name="Murphy L.D."/>
            <person name="Oliver S."/>
            <person name="Osborne J."/>
            <person name="Quail M.A."/>
            <person name="Rajandream M.A."/>
            <person name="Rogers J."/>
            <person name="Rutter S."/>
            <person name="Seeger K."/>
            <person name="Skelton S."/>
            <person name="Squares S."/>
            <person name="Squares R."/>
            <person name="Sulston J.E."/>
            <person name="Taylor K."/>
            <person name="Whitehead S."/>
            <person name="Barrell B.G."/>
        </authorList>
    </citation>
    <scope>NUCLEOTIDE SEQUENCE [LARGE SCALE GENOMIC DNA]</scope>
    <source>
        <strain>ATCC 25618 / H37Rv</strain>
    </source>
</reference>
<reference key="2">
    <citation type="journal article" date="2011" name="Mol. Cell. Proteomics">
        <title>Proteogenomic analysis of Mycobacterium tuberculosis by high resolution mass spectrometry.</title>
        <authorList>
            <person name="Kelkar D.S."/>
            <person name="Kumar D."/>
            <person name="Kumar P."/>
            <person name="Balakrishnan L."/>
            <person name="Muthusamy B."/>
            <person name="Yadav A.K."/>
            <person name="Shrivastava P."/>
            <person name="Marimuthu A."/>
            <person name="Anand S."/>
            <person name="Sundaram H."/>
            <person name="Kingsbury R."/>
            <person name="Harsha H.C."/>
            <person name="Nair B."/>
            <person name="Prasad T.S."/>
            <person name="Chauhan D.S."/>
            <person name="Katoch K."/>
            <person name="Katoch V.M."/>
            <person name="Kumar P."/>
            <person name="Chaerkady R."/>
            <person name="Ramachandran S."/>
            <person name="Dash D."/>
            <person name="Pandey A."/>
        </authorList>
    </citation>
    <scope>ACETYLATION [LARGE SCALE ANALYSIS] AT THR-2</scope>
    <scope>CLEAVAGE OF INITIATOR METHIONINE [LARGE SCALE ANALYSIS]</scope>
    <scope>IDENTIFICATION BY MASS SPECTROMETRY [LARGE SCALE ANALYSIS]</scope>
    <source>
        <strain>ATCC 25618 / H37Rv</strain>
    </source>
</reference>
<name>Y877_MYCTU</name>
<evidence type="ECO:0007744" key="1">
    <source>
    </source>
</evidence>